<gene>
    <name type="primary">mtrB</name>
    <name type="ordered locus">BQ2027_MB3273C</name>
</gene>
<reference key="1">
    <citation type="journal article" date="2003" name="Proc. Natl. Acad. Sci. U.S.A.">
        <title>The complete genome sequence of Mycobacterium bovis.</title>
        <authorList>
            <person name="Garnier T."/>
            <person name="Eiglmeier K."/>
            <person name="Camus J.-C."/>
            <person name="Medina N."/>
            <person name="Mansoor H."/>
            <person name="Pryor M."/>
            <person name="Duthoy S."/>
            <person name="Grondin S."/>
            <person name="Lacroix C."/>
            <person name="Monsempe C."/>
            <person name="Simon S."/>
            <person name="Harris B."/>
            <person name="Atkin R."/>
            <person name="Doggett J."/>
            <person name="Mayes R."/>
            <person name="Keating L."/>
            <person name="Wheeler P.R."/>
            <person name="Parkhill J."/>
            <person name="Barrell B.G."/>
            <person name="Cole S.T."/>
            <person name="Gordon S.V."/>
            <person name="Hewinson R.G."/>
        </authorList>
    </citation>
    <scope>NUCLEOTIDE SEQUENCE [LARGE SCALE GENOMIC DNA]</scope>
    <source>
        <strain>ATCC BAA-935 / AF2122/97</strain>
    </source>
</reference>
<reference key="2">
    <citation type="journal article" date="2017" name="Genome Announc.">
        <title>Updated reference genome sequence and annotation of Mycobacterium bovis AF2122/97.</title>
        <authorList>
            <person name="Malone K.M."/>
            <person name="Farrell D."/>
            <person name="Stuber T.P."/>
            <person name="Schubert O.T."/>
            <person name="Aebersold R."/>
            <person name="Robbe-Austerman S."/>
            <person name="Gordon S.V."/>
        </authorList>
    </citation>
    <scope>NUCLEOTIDE SEQUENCE [LARGE SCALE GENOMIC DNA]</scope>
    <scope>GENOME REANNOTATION</scope>
    <source>
        <strain>ATCC BAA-935 / AF2122/97</strain>
    </source>
</reference>
<accession>P59963</accession>
<accession>A0A1R3Y3J3</accession>
<accession>X2BNF3</accession>
<name>MTRB_MYCBO</name>
<organism>
    <name type="scientific">Mycobacterium bovis (strain ATCC BAA-935 / AF2122/97)</name>
    <dbReference type="NCBI Taxonomy" id="233413"/>
    <lineage>
        <taxon>Bacteria</taxon>
        <taxon>Bacillati</taxon>
        <taxon>Actinomycetota</taxon>
        <taxon>Actinomycetes</taxon>
        <taxon>Mycobacteriales</taxon>
        <taxon>Mycobacteriaceae</taxon>
        <taxon>Mycobacterium</taxon>
        <taxon>Mycobacterium tuberculosis complex</taxon>
    </lineage>
</organism>
<dbReference type="EC" id="2.7.13.3"/>
<dbReference type="EMBL" id="LT708304">
    <property type="protein sequence ID" value="SIU01902.1"/>
    <property type="molecule type" value="Genomic_DNA"/>
</dbReference>
<dbReference type="RefSeq" id="NP_856918.1">
    <property type="nucleotide sequence ID" value="NC_002945.3"/>
</dbReference>
<dbReference type="RefSeq" id="WP_003416988.1">
    <property type="nucleotide sequence ID" value="NC_002945.4"/>
</dbReference>
<dbReference type="SMR" id="P59963"/>
<dbReference type="GeneID" id="45427239"/>
<dbReference type="KEGG" id="mbo:BQ2027_MB3273C"/>
<dbReference type="PATRIC" id="fig|233413.5.peg.3600"/>
<dbReference type="Proteomes" id="UP000001419">
    <property type="component" value="Chromosome"/>
</dbReference>
<dbReference type="GO" id="GO:0005886">
    <property type="term" value="C:plasma membrane"/>
    <property type="evidence" value="ECO:0007669"/>
    <property type="project" value="UniProtKB-SubCell"/>
</dbReference>
<dbReference type="GO" id="GO:0005524">
    <property type="term" value="F:ATP binding"/>
    <property type="evidence" value="ECO:0007669"/>
    <property type="project" value="UniProtKB-KW"/>
</dbReference>
<dbReference type="GO" id="GO:0000155">
    <property type="term" value="F:phosphorelay sensor kinase activity"/>
    <property type="evidence" value="ECO:0007669"/>
    <property type="project" value="InterPro"/>
</dbReference>
<dbReference type="CDD" id="cd06225">
    <property type="entry name" value="HAMP"/>
    <property type="match status" value="1"/>
</dbReference>
<dbReference type="CDD" id="cd00075">
    <property type="entry name" value="HATPase"/>
    <property type="match status" value="1"/>
</dbReference>
<dbReference type="CDD" id="cd00082">
    <property type="entry name" value="HisKA"/>
    <property type="match status" value="1"/>
</dbReference>
<dbReference type="FunFam" id="1.10.287.130:FF:000010">
    <property type="entry name" value="Two-component sensor histidine kinase"/>
    <property type="match status" value="1"/>
</dbReference>
<dbReference type="FunFam" id="3.30.565.10:FF:000013">
    <property type="entry name" value="Two-component sensor histidine kinase"/>
    <property type="match status" value="1"/>
</dbReference>
<dbReference type="Gene3D" id="1.10.287.130">
    <property type="match status" value="1"/>
</dbReference>
<dbReference type="Gene3D" id="6.10.340.10">
    <property type="match status" value="1"/>
</dbReference>
<dbReference type="Gene3D" id="3.30.565.10">
    <property type="entry name" value="Histidine kinase-like ATPase, C-terminal domain"/>
    <property type="match status" value="1"/>
</dbReference>
<dbReference type="InterPro" id="IPR003660">
    <property type="entry name" value="HAMP_dom"/>
</dbReference>
<dbReference type="InterPro" id="IPR036890">
    <property type="entry name" value="HATPase_C_sf"/>
</dbReference>
<dbReference type="InterPro" id="IPR005467">
    <property type="entry name" value="His_kinase_dom"/>
</dbReference>
<dbReference type="InterPro" id="IPR003661">
    <property type="entry name" value="HisK_dim/P_dom"/>
</dbReference>
<dbReference type="InterPro" id="IPR036097">
    <property type="entry name" value="HisK_dim/P_sf"/>
</dbReference>
<dbReference type="InterPro" id="IPR047669">
    <property type="entry name" value="MtrAB_MtrB"/>
</dbReference>
<dbReference type="InterPro" id="IPR004358">
    <property type="entry name" value="Sig_transdc_His_kin-like_C"/>
</dbReference>
<dbReference type="NCBIfam" id="NF040691">
    <property type="entry name" value="MtrAB_MtrB"/>
    <property type="match status" value="1"/>
</dbReference>
<dbReference type="PANTHER" id="PTHR43547:SF2">
    <property type="entry name" value="HYBRID SIGNAL TRANSDUCTION HISTIDINE KINASE C"/>
    <property type="match status" value="1"/>
</dbReference>
<dbReference type="PANTHER" id="PTHR43547">
    <property type="entry name" value="TWO-COMPONENT HISTIDINE KINASE"/>
    <property type="match status" value="1"/>
</dbReference>
<dbReference type="Pfam" id="PF00672">
    <property type="entry name" value="HAMP"/>
    <property type="match status" value="1"/>
</dbReference>
<dbReference type="Pfam" id="PF02518">
    <property type="entry name" value="HATPase_c"/>
    <property type="match status" value="1"/>
</dbReference>
<dbReference type="Pfam" id="PF00512">
    <property type="entry name" value="HisKA"/>
    <property type="match status" value="1"/>
</dbReference>
<dbReference type="PRINTS" id="PR00344">
    <property type="entry name" value="BCTRLSENSOR"/>
</dbReference>
<dbReference type="SMART" id="SM00304">
    <property type="entry name" value="HAMP"/>
    <property type="match status" value="1"/>
</dbReference>
<dbReference type="SMART" id="SM00387">
    <property type="entry name" value="HATPase_c"/>
    <property type="match status" value="1"/>
</dbReference>
<dbReference type="SMART" id="SM00388">
    <property type="entry name" value="HisKA"/>
    <property type="match status" value="1"/>
</dbReference>
<dbReference type="SUPFAM" id="SSF55874">
    <property type="entry name" value="ATPase domain of HSP90 chaperone/DNA topoisomerase II/histidine kinase"/>
    <property type="match status" value="1"/>
</dbReference>
<dbReference type="SUPFAM" id="SSF158472">
    <property type="entry name" value="HAMP domain-like"/>
    <property type="match status" value="1"/>
</dbReference>
<dbReference type="SUPFAM" id="SSF47384">
    <property type="entry name" value="Homodimeric domain of signal transducing histidine kinase"/>
    <property type="match status" value="1"/>
</dbReference>
<dbReference type="PROSITE" id="PS50885">
    <property type="entry name" value="HAMP"/>
    <property type="match status" value="1"/>
</dbReference>
<dbReference type="PROSITE" id="PS50109">
    <property type="entry name" value="HIS_KIN"/>
    <property type="match status" value="1"/>
</dbReference>
<comment type="function">
    <text evidence="1">Member of the two-component regulatory system MtrA/MtrB. Seems to function as a membrane-associated protein kinase that phosphorylates MtrA in response to environmental signals (By similarity).</text>
</comment>
<comment type="catalytic activity">
    <reaction>
        <text>ATP + protein L-histidine = ADP + protein N-phospho-L-histidine.</text>
        <dbReference type="EC" id="2.7.13.3"/>
    </reaction>
</comment>
<comment type="subcellular location">
    <subcellularLocation>
        <location evidence="6">Cell membrane</location>
        <topology evidence="6">Multi-pass membrane protein</topology>
    </subcellularLocation>
</comment>
<proteinExistence type="inferred from homology"/>
<protein>
    <recommendedName>
        <fullName>Sensor histidine kinase MtrB</fullName>
        <ecNumber>2.7.13.3</ecNumber>
    </recommendedName>
</protein>
<evidence type="ECO:0000250" key="1"/>
<evidence type="ECO:0000255" key="2"/>
<evidence type="ECO:0000255" key="3">
    <source>
        <dbReference type="PROSITE-ProRule" id="PRU00102"/>
    </source>
</evidence>
<evidence type="ECO:0000255" key="4">
    <source>
        <dbReference type="PROSITE-ProRule" id="PRU00107"/>
    </source>
</evidence>
<evidence type="ECO:0000256" key="5">
    <source>
        <dbReference type="SAM" id="MobiDB-lite"/>
    </source>
</evidence>
<evidence type="ECO:0000305" key="6"/>
<keyword id="KW-0067">ATP-binding</keyword>
<keyword id="KW-1003">Cell membrane</keyword>
<keyword id="KW-0418">Kinase</keyword>
<keyword id="KW-0472">Membrane</keyword>
<keyword id="KW-0547">Nucleotide-binding</keyword>
<keyword id="KW-0597">Phosphoprotein</keyword>
<keyword id="KW-1185">Reference proteome</keyword>
<keyword id="KW-0808">Transferase</keyword>
<keyword id="KW-0812">Transmembrane</keyword>
<keyword id="KW-1133">Transmembrane helix</keyword>
<keyword id="KW-0902">Two-component regulatory system</keyword>
<feature type="chain" id="PRO_0000074806" description="Sensor histidine kinase MtrB">
    <location>
        <begin position="1"/>
        <end position="567"/>
    </location>
</feature>
<feature type="transmembrane region" description="Helical" evidence="2">
    <location>
        <begin position="42"/>
        <end position="62"/>
    </location>
</feature>
<feature type="transmembrane region" description="Helical" evidence="2">
    <location>
        <begin position="213"/>
        <end position="233"/>
    </location>
</feature>
<feature type="domain" description="HAMP" evidence="3">
    <location>
        <begin position="235"/>
        <end position="287"/>
    </location>
</feature>
<feature type="domain" description="Histidine kinase" evidence="4">
    <location>
        <begin position="302"/>
        <end position="519"/>
    </location>
</feature>
<feature type="region of interest" description="Disordered" evidence="5">
    <location>
        <begin position="1"/>
        <end position="20"/>
    </location>
</feature>
<feature type="region of interest" description="Disordered" evidence="5">
    <location>
        <begin position="526"/>
        <end position="567"/>
    </location>
</feature>
<feature type="compositionally biased region" description="Basic residues" evidence="5">
    <location>
        <begin position="1"/>
        <end position="15"/>
    </location>
</feature>
<feature type="compositionally biased region" description="Pro residues" evidence="5">
    <location>
        <begin position="529"/>
        <end position="551"/>
    </location>
</feature>
<feature type="compositionally biased region" description="Basic and acidic residues" evidence="5">
    <location>
        <begin position="552"/>
        <end position="567"/>
    </location>
</feature>
<feature type="modified residue" description="Phosphohistidine; by autocatalysis" evidence="4">
    <location>
        <position position="305"/>
    </location>
</feature>
<sequence>MIFGSRRRIRGRRGRSGPMTRGLSALSRAVAVAWRRSLQLRVVALTLGLSLAVILALGFVLTSQVTNRVLDIKVRAAIDQIERARTTVSGIVNGEETRSLDSSLQLARNTLTSKTDPASGAGLAGAFDAVLMVPGDGPRAASTAGPVDQVPNALRGFVKAGQAAYQYATVQTEGFSGPALIIGTPTLSRVANLELYLIFPLASEQATITLVRGTMATGGLVLLVLLAGIALLVSRQVVVPVRSASRIAERFAEGHLSERMPVRGEDDMARLAVSFNDMAESLSRQIAQLEEFGNLQRRFTSDVSHELRTPLTTVRMAADLIYDHSADLDPTLRRSTELMVSELDRFETLLNDLLEISRHDAGVAELSVEAVDLRTTVNNALGNVGHLAEEAGIELLVDLPAEQVIAEVDARRVERILRNLIANAIDHAEHKPVRIRMAADEDTVAVTVRDYGVGLRPGEEKLVFSRFWRSDPSRVRRSGGTGLGLAISVEDARLHQGRLEAWGEPGEGACFRLTLPLVRGHKVTTSPLPMKPIPQPVLQPVAQPNPQPMPPEYKERQRPREHAEWSG</sequence>